<gene>
    <name evidence="1" type="primary">murG</name>
    <name type="ordered locus">NGR_c21070</name>
</gene>
<sequence>MDKGIIFLAAGGTGGHLFPAEALAHELKASGYAVHLVTDSRAERYAGKFPAEEVHVVPSATIGSKNPIKLAQSVWKLWTGLRAARRLIARYKPRAVVGFGGYPTVPPLLAATGMGVPSLIHEQNAVMGRANKMLASRVQAIAGGFLPEGTGAFAAKTVTTGNPVRPAVSEAARVPYAAPHGGPFHLVVFGGSQGAQFFSKAVPQAICRLDDAQRQRLKVTQQARPEDREGVTAAYDKLGIPAEVSPFFTDMAARIASAHLVICRSGASTVSEVSVIGRPAILVPYPYALDHDQAANAAALAAKGGARVIAQAELNAERLAGILSDAMNTPDALAQMAANARETGKPDAARLLASLVEAIASGSTVAKFKEARS</sequence>
<accession>C3MEM9</accession>
<reference key="1">
    <citation type="journal article" date="2009" name="Appl. Environ. Microbiol.">
        <title>Rhizobium sp. strain NGR234 possesses a remarkable number of secretion systems.</title>
        <authorList>
            <person name="Schmeisser C."/>
            <person name="Liesegang H."/>
            <person name="Krysciak D."/>
            <person name="Bakkou N."/>
            <person name="Le Quere A."/>
            <person name="Wollherr A."/>
            <person name="Heinemeyer I."/>
            <person name="Morgenstern B."/>
            <person name="Pommerening-Roeser A."/>
            <person name="Flores M."/>
            <person name="Palacios R."/>
            <person name="Brenner S."/>
            <person name="Gottschalk G."/>
            <person name="Schmitz R.A."/>
            <person name="Broughton W.J."/>
            <person name="Perret X."/>
            <person name="Strittmatter A.W."/>
            <person name="Streit W.R."/>
        </authorList>
    </citation>
    <scope>NUCLEOTIDE SEQUENCE [LARGE SCALE GENOMIC DNA]</scope>
    <source>
        <strain>NBRC 101917 / NGR234</strain>
    </source>
</reference>
<name>MURG_SINFN</name>
<dbReference type="EC" id="2.4.1.227" evidence="1"/>
<dbReference type="EMBL" id="CP001389">
    <property type="protein sequence ID" value="ACP25870.1"/>
    <property type="molecule type" value="Genomic_DNA"/>
</dbReference>
<dbReference type="RefSeq" id="WP_012708633.1">
    <property type="nucleotide sequence ID" value="NC_012587.1"/>
</dbReference>
<dbReference type="RefSeq" id="YP_002826623.1">
    <property type="nucleotide sequence ID" value="NC_012587.1"/>
</dbReference>
<dbReference type="SMR" id="C3MEM9"/>
<dbReference type="STRING" id="394.NGR_c21070"/>
<dbReference type="CAZy" id="GT28">
    <property type="family name" value="Glycosyltransferase Family 28"/>
</dbReference>
<dbReference type="KEGG" id="rhi:NGR_c21070"/>
<dbReference type="PATRIC" id="fig|394.7.peg.4932"/>
<dbReference type="eggNOG" id="COG0707">
    <property type="taxonomic scope" value="Bacteria"/>
</dbReference>
<dbReference type="HOGENOM" id="CLU_037404_2_1_5"/>
<dbReference type="OrthoDB" id="9808936at2"/>
<dbReference type="UniPathway" id="UPA00219"/>
<dbReference type="Proteomes" id="UP000001054">
    <property type="component" value="Chromosome"/>
</dbReference>
<dbReference type="GO" id="GO:0005886">
    <property type="term" value="C:plasma membrane"/>
    <property type="evidence" value="ECO:0007669"/>
    <property type="project" value="UniProtKB-SubCell"/>
</dbReference>
<dbReference type="GO" id="GO:0051991">
    <property type="term" value="F:UDP-N-acetyl-D-glucosamine:N-acetylmuramoyl-L-alanyl-D-glutamyl-meso-2,6-diaminopimelyl-D-alanyl-D-alanine-diphosphoundecaprenol 4-beta-N-acetylglucosaminlytransferase activity"/>
    <property type="evidence" value="ECO:0007669"/>
    <property type="project" value="RHEA"/>
</dbReference>
<dbReference type="GO" id="GO:0050511">
    <property type="term" value="F:undecaprenyldiphospho-muramoylpentapeptide beta-N-acetylglucosaminyltransferase activity"/>
    <property type="evidence" value="ECO:0007669"/>
    <property type="project" value="UniProtKB-UniRule"/>
</dbReference>
<dbReference type="GO" id="GO:0005975">
    <property type="term" value="P:carbohydrate metabolic process"/>
    <property type="evidence" value="ECO:0007669"/>
    <property type="project" value="InterPro"/>
</dbReference>
<dbReference type="GO" id="GO:0051301">
    <property type="term" value="P:cell division"/>
    <property type="evidence" value="ECO:0007669"/>
    <property type="project" value="UniProtKB-KW"/>
</dbReference>
<dbReference type="GO" id="GO:0071555">
    <property type="term" value="P:cell wall organization"/>
    <property type="evidence" value="ECO:0007669"/>
    <property type="project" value="UniProtKB-KW"/>
</dbReference>
<dbReference type="GO" id="GO:0030259">
    <property type="term" value="P:lipid glycosylation"/>
    <property type="evidence" value="ECO:0007669"/>
    <property type="project" value="UniProtKB-UniRule"/>
</dbReference>
<dbReference type="GO" id="GO:0009252">
    <property type="term" value="P:peptidoglycan biosynthetic process"/>
    <property type="evidence" value="ECO:0007669"/>
    <property type="project" value="UniProtKB-UniRule"/>
</dbReference>
<dbReference type="GO" id="GO:0008360">
    <property type="term" value="P:regulation of cell shape"/>
    <property type="evidence" value="ECO:0007669"/>
    <property type="project" value="UniProtKB-KW"/>
</dbReference>
<dbReference type="CDD" id="cd03785">
    <property type="entry name" value="GT28_MurG"/>
    <property type="match status" value="1"/>
</dbReference>
<dbReference type="Gene3D" id="3.40.50.2000">
    <property type="entry name" value="Glycogen Phosphorylase B"/>
    <property type="match status" value="2"/>
</dbReference>
<dbReference type="HAMAP" id="MF_00033">
    <property type="entry name" value="MurG"/>
    <property type="match status" value="1"/>
</dbReference>
<dbReference type="InterPro" id="IPR006009">
    <property type="entry name" value="GlcNAc_MurG"/>
</dbReference>
<dbReference type="InterPro" id="IPR007235">
    <property type="entry name" value="Glyco_trans_28_C"/>
</dbReference>
<dbReference type="InterPro" id="IPR004276">
    <property type="entry name" value="GlycoTrans_28_N"/>
</dbReference>
<dbReference type="NCBIfam" id="TIGR01133">
    <property type="entry name" value="murG"/>
    <property type="match status" value="1"/>
</dbReference>
<dbReference type="PANTHER" id="PTHR21015:SF22">
    <property type="entry name" value="GLYCOSYLTRANSFERASE"/>
    <property type="match status" value="1"/>
</dbReference>
<dbReference type="PANTHER" id="PTHR21015">
    <property type="entry name" value="UDP-N-ACETYLGLUCOSAMINE--N-ACETYLMURAMYL-(PENTAPEPTIDE) PYROPHOSPHORYL-UNDECAPRENOL N-ACETYLGLUCOSAMINE TRANSFERASE 1"/>
    <property type="match status" value="1"/>
</dbReference>
<dbReference type="Pfam" id="PF04101">
    <property type="entry name" value="Glyco_tran_28_C"/>
    <property type="match status" value="1"/>
</dbReference>
<dbReference type="Pfam" id="PF03033">
    <property type="entry name" value="Glyco_transf_28"/>
    <property type="match status" value="1"/>
</dbReference>
<dbReference type="SUPFAM" id="SSF53756">
    <property type="entry name" value="UDP-Glycosyltransferase/glycogen phosphorylase"/>
    <property type="match status" value="1"/>
</dbReference>
<comment type="function">
    <text evidence="1">Cell wall formation. Catalyzes the transfer of a GlcNAc subunit on undecaprenyl-pyrophosphoryl-MurNAc-pentapeptide (lipid intermediate I) to form undecaprenyl-pyrophosphoryl-MurNAc-(pentapeptide)GlcNAc (lipid intermediate II).</text>
</comment>
<comment type="catalytic activity">
    <reaction evidence="1">
        <text>di-trans,octa-cis-undecaprenyl diphospho-N-acetyl-alpha-D-muramoyl-L-alanyl-D-glutamyl-meso-2,6-diaminopimeloyl-D-alanyl-D-alanine + UDP-N-acetyl-alpha-D-glucosamine = di-trans,octa-cis-undecaprenyl diphospho-[N-acetyl-alpha-D-glucosaminyl-(1-&gt;4)]-N-acetyl-alpha-D-muramoyl-L-alanyl-D-glutamyl-meso-2,6-diaminopimeloyl-D-alanyl-D-alanine + UDP + H(+)</text>
        <dbReference type="Rhea" id="RHEA:31227"/>
        <dbReference type="ChEBI" id="CHEBI:15378"/>
        <dbReference type="ChEBI" id="CHEBI:57705"/>
        <dbReference type="ChEBI" id="CHEBI:58223"/>
        <dbReference type="ChEBI" id="CHEBI:61387"/>
        <dbReference type="ChEBI" id="CHEBI:61388"/>
        <dbReference type="EC" id="2.4.1.227"/>
    </reaction>
</comment>
<comment type="pathway">
    <text evidence="1">Cell wall biogenesis; peptidoglycan biosynthesis.</text>
</comment>
<comment type="subcellular location">
    <subcellularLocation>
        <location evidence="1">Cell inner membrane</location>
        <topology evidence="1">Peripheral membrane protein</topology>
        <orientation evidence="1">Cytoplasmic side</orientation>
    </subcellularLocation>
</comment>
<comment type="similarity">
    <text evidence="1">Belongs to the glycosyltransferase 28 family. MurG subfamily.</text>
</comment>
<evidence type="ECO:0000255" key="1">
    <source>
        <dbReference type="HAMAP-Rule" id="MF_00033"/>
    </source>
</evidence>
<feature type="chain" id="PRO_1000192140" description="UDP-N-acetylglucosamine--N-acetylmuramyl-(pentapeptide) pyrophosphoryl-undecaprenol N-acetylglucosamine transferase">
    <location>
        <begin position="1"/>
        <end position="373"/>
    </location>
</feature>
<feature type="binding site" evidence="1">
    <location>
        <begin position="13"/>
        <end position="15"/>
    </location>
    <ligand>
        <name>UDP-N-acetyl-alpha-D-glucosamine</name>
        <dbReference type="ChEBI" id="CHEBI:57705"/>
    </ligand>
</feature>
<feature type="binding site" evidence="1">
    <location>
        <position position="124"/>
    </location>
    <ligand>
        <name>UDP-N-acetyl-alpha-D-glucosamine</name>
        <dbReference type="ChEBI" id="CHEBI:57705"/>
    </ligand>
</feature>
<feature type="binding site" evidence="1">
    <location>
        <position position="165"/>
    </location>
    <ligand>
        <name>UDP-N-acetyl-alpha-D-glucosamine</name>
        <dbReference type="ChEBI" id="CHEBI:57705"/>
    </ligand>
</feature>
<feature type="binding site" evidence="1">
    <location>
        <position position="192"/>
    </location>
    <ligand>
        <name>UDP-N-acetyl-alpha-D-glucosamine</name>
        <dbReference type="ChEBI" id="CHEBI:57705"/>
    </ligand>
</feature>
<feature type="binding site" evidence="1">
    <location>
        <position position="293"/>
    </location>
    <ligand>
        <name>UDP-N-acetyl-alpha-D-glucosamine</name>
        <dbReference type="ChEBI" id="CHEBI:57705"/>
    </ligand>
</feature>
<protein>
    <recommendedName>
        <fullName evidence="1">UDP-N-acetylglucosamine--N-acetylmuramyl-(pentapeptide) pyrophosphoryl-undecaprenol N-acetylglucosamine transferase</fullName>
        <ecNumber evidence="1">2.4.1.227</ecNumber>
    </recommendedName>
    <alternativeName>
        <fullName evidence="1">Undecaprenyl-PP-MurNAc-pentapeptide-UDPGlcNAc GlcNAc transferase</fullName>
    </alternativeName>
</protein>
<proteinExistence type="inferred from homology"/>
<organism>
    <name type="scientific">Sinorhizobium fredii (strain NBRC 101917 / NGR234)</name>
    <dbReference type="NCBI Taxonomy" id="394"/>
    <lineage>
        <taxon>Bacteria</taxon>
        <taxon>Pseudomonadati</taxon>
        <taxon>Pseudomonadota</taxon>
        <taxon>Alphaproteobacteria</taxon>
        <taxon>Hyphomicrobiales</taxon>
        <taxon>Rhizobiaceae</taxon>
        <taxon>Sinorhizobium/Ensifer group</taxon>
        <taxon>Sinorhizobium</taxon>
    </lineage>
</organism>
<keyword id="KW-0131">Cell cycle</keyword>
<keyword id="KW-0132">Cell division</keyword>
<keyword id="KW-0997">Cell inner membrane</keyword>
<keyword id="KW-1003">Cell membrane</keyword>
<keyword id="KW-0133">Cell shape</keyword>
<keyword id="KW-0961">Cell wall biogenesis/degradation</keyword>
<keyword id="KW-0328">Glycosyltransferase</keyword>
<keyword id="KW-0472">Membrane</keyword>
<keyword id="KW-0573">Peptidoglycan synthesis</keyword>
<keyword id="KW-1185">Reference proteome</keyword>
<keyword id="KW-0808">Transferase</keyword>